<reference key="1">
    <citation type="submission" date="2008-10" db="EMBL/GenBank/DDBJ databases">
        <title>Genome sequence of Ureaplasma urealyticum serovar 10 ATCC-33699.</title>
        <authorList>
            <person name="Shrivastava S."/>
            <person name="Methe B.A."/>
            <person name="Glass J."/>
            <person name="White K."/>
            <person name="Duffy L.B."/>
        </authorList>
    </citation>
    <scope>NUCLEOTIDE SEQUENCE [LARGE SCALE GENOMIC DNA]</scope>
    <source>
        <strain>ATCC 33699 / Western</strain>
    </source>
</reference>
<sequence length="333" mass="38605">MDIANLIQNLKQTLQNASNERHLIELKNIFVKQHLLPLYDELKKSDNKKEMGLLINEFKQQIELITNQALVELNNKSDQIDLKKWANKTLFTPFIKNGHHHIINNIIDDIAQFFKKLNFEIVSGPEVVSPVYNFDHLNIDENHPARATADSFFINSVQMLRTHCTTTTAQVLENNPHKDIRIMSFGNVYRKDDDDATHSHQFNQVDFVWVKEGLTVANLKWLIDSLIKYLFGQNLKTRYRLSFFPFTEPSFEVDVQCFKCDLKGCAVCKKSTWIEIMGTGMLHENVLKAANINDIKTGMAFGVGIDRIAMLKYEIDDIRYLYSNNFKFNAQIK</sequence>
<evidence type="ECO:0000255" key="1">
    <source>
        <dbReference type="HAMAP-Rule" id="MF_00281"/>
    </source>
</evidence>
<dbReference type="EC" id="6.1.1.20" evidence="1"/>
<dbReference type="EMBL" id="CP001184">
    <property type="protein sequence ID" value="ACI60170.1"/>
    <property type="molecule type" value="Genomic_DNA"/>
</dbReference>
<dbReference type="RefSeq" id="WP_004025544.1">
    <property type="nucleotide sequence ID" value="NC_011374.1"/>
</dbReference>
<dbReference type="SMR" id="B5ZBV3"/>
<dbReference type="STRING" id="565575.UUR10_0502"/>
<dbReference type="KEGG" id="uue:UUR10_0502"/>
<dbReference type="eggNOG" id="COG0016">
    <property type="taxonomic scope" value="Bacteria"/>
</dbReference>
<dbReference type="HOGENOM" id="CLU_025086_0_1_14"/>
<dbReference type="OrthoDB" id="9800719at2"/>
<dbReference type="Proteomes" id="UP000002018">
    <property type="component" value="Chromosome"/>
</dbReference>
<dbReference type="GO" id="GO:0005737">
    <property type="term" value="C:cytoplasm"/>
    <property type="evidence" value="ECO:0007669"/>
    <property type="project" value="UniProtKB-SubCell"/>
</dbReference>
<dbReference type="GO" id="GO:0005524">
    <property type="term" value="F:ATP binding"/>
    <property type="evidence" value="ECO:0007669"/>
    <property type="project" value="UniProtKB-UniRule"/>
</dbReference>
<dbReference type="GO" id="GO:0000287">
    <property type="term" value="F:magnesium ion binding"/>
    <property type="evidence" value="ECO:0007669"/>
    <property type="project" value="UniProtKB-UniRule"/>
</dbReference>
<dbReference type="GO" id="GO:0004826">
    <property type="term" value="F:phenylalanine-tRNA ligase activity"/>
    <property type="evidence" value="ECO:0007669"/>
    <property type="project" value="UniProtKB-UniRule"/>
</dbReference>
<dbReference type="GO" id="GO:0000049">
    <property type="term" value="F:tRNA binding"/>
    <property type="evidence" value="ECO:0007669"/>
    <property type="project" value="InterPro"/>
</dbReference>
<dbReference type="GO" id="GO:0006432">
    <property type="term" value="P:phenylalanyl-tRNA aminoacylation"/>
    <property type="evidence" value="ECO:0007669"/>
    <property type="project" value="UniProtKB-UniRule"/>
</dbReference>
<dbReference type="CDD" id="cd00496">
    <property type="entry name" value="PheRS_alpha_core"/>
    <property type="match status" value="1"/>
</dbReference>
<dbReference type="Gene3D" id="3.30.930.10">
    <property type="entry name" value="Bira Bifunctional Protein, Domain 2"/>
    <property type="match status" value="1"/>
</dbReference>
<dbReference type="HAMAP" id="MF_00281">
    <property type="entry name" value="Phe_tRNA_synth_alpha1"/>
    <property type="match status" value="1"/>
</dbReference>
<dbReference type="InterPro" id="IPR006195">
    <property type="entry name" value="aa-tRNA-synth_II"/>
</dbReference>
<dbReference type="InterPro" id="IPR045864">
    <property type="entry name" value="aa-tRNA-synth_II/BPL/LPL"/>
</dbReference>
<dbReference type="InterPro" id="IPR022911">
    <property type="entry name" value="Phe_tRNA_ligase_alpha1_bac"/>
</dbReference>
<dbReference type="InterPro" id="IPR002319">
    <property type="entry name" value="Phenylalanyl-tRNA_Synthase"/>
</dbReference>
<dbReference type="PANTHER" id="PTHR11538:SF41">
    <property type="entry name" value="PHENYLALANINE--TRNA LIGASE, MITOCHONDRIAL"/>
    <property type="match status" value="1"/>
</dbReference>
<dbReference type="PANTHER" id="PTHR11538">
    <property type="entry name" value="PHENYLALANYL-TRNA SYNTHETASE"/>
    <property type="match status" value="1"/>
</dbReference>
<dbReference type="Pfam" id="PF01409">
    <property type="entry name" value="tRNA-synt_2d"/>
    <property type="match status" value="1"/>
</dbReference>
<dbReference type="SUPFAM" id="SSF55681">
    <property type="entry name" value="Class II aaRS and biotin synthetases"/>
    <property type="match status" value="1"/>
</dbReference>
<dbReference type="PROSITE" id="PS50862">
    <property type="entry name" value="AA_TRNA_LIGASE_II"/>
    <property type="match status" value="1"/>
</dbReference>
<name>SYFA_UREU1</name>
<proteinExistence type="inferred from homology"/>
<protein>
    <recommendedName>
        <fullName evidence="1">Phenylalanine--tRNA ligase alpha subunit</fullName>
        <ecNumber evidence="1">6.1.1.20</ecNumber>
    </recommendedName>
    <alternativeName>
        <fullName evidence="1">Phenylalanyl-tRNA synthetase alpha subunit</fullName>
        <shortName evidence="1">PheRS</shortName>
    </alternativeName>
</protein>
<accession>B5ZBV3</accession>
<keyword id="KW-0030">Aminoacyl-tRNA synthetase</keyword>
<keyword id="KW-0067">ATP-binding</keyword>
<keyword id="KW-0963">Cytoplasm</keyword>
<keyword id="KW-0436">Ligase</keyword>
<keyword id="KW-0460">Magnesium</keyword>
<keyword id="KW-0479">Metal-binding</keyword>
<keyword id="KW-0547">Nucleotide-binding</keyword>
<keyword id="KW-0648">Protein biosynthesis</keyword>
<organism>
    <name type="scientific">Ureaplasma urealyticum serovar 10 (strain ATCC 33699 / Western)</name>
    <dbReference type="NCBI Taxonomy" id="565575"/>
    <lineage>
        <taxon>Bacteria</taxon>
        <taxon>Bacillati</taxon>
        <taxon>Mycoplasmatota</taxon>
        <taxon>Mycoplasmoidales</taxon>
        <taxon>Mycoplasmoidaceae</taxon>
        <taxon>Ureaplasma</taxon>
    </lineage>
</organism>
<feature type="chain" id="PRO_1000114925" description="Phenylalanine--tRNA ligase alpha subunit">
    <location>
        <begin position="1"/>
        <end position="333"/>
    </location>
</feature>
<feature type="binding site" evidence="1">
    <location>
        <position position="248"/>
    </location>
    <ligand>
        <name>Mg(2+)</name>
        <dbReference type="ChEBI" id="CHEBI:18420"/>
        <note>shared with beta subunit</note>
    </ligand>
</feature>
<gene>
    <name evidence="1" type="primary">pheS</name>
    <name type="ordered locus">UUR10_0502</name>
</gene>
<comment type="catalytic activity">
    <reaction evidence="1">
        <text>tRNA(Phe) + L-phenylalanine + ATP = L-phenylalanyl-tRNA(Phe) + AMP + diphosphate + H(+)</text>
        <dbReference type="Rhea" id="RHEA:19413"/>
        <dbReference type="Rhea" id="RHEA-COMP:9668"/>
        <dbReference type="Rhea" id="RHEA-COMP:9699"/>
        <dbReference type="ChEBI" id="CHEBI:15378"/>
        <dbReference type="ChEBI" id="CHEBI:30616"/>
        <dbReference type="ChEBI" id="CHEBI:33019"/>
        <dbReference type="ChEBI" id="CHEBI:58095"/>
        <dbReference type="ChEBI" id="CHEBI:78442"/>
        <dbReference type="ChEBI" id="CHEBI:78531"/>
        <dbReference type="ChEBI" id="CHEBI:456215"/>
        <dbReference type="EC" id="6.1.1.20"/>
    </reaction>
</comment>
<comment type="cofactor">
    <cofactor evidence="1">
        <name>Mg(2+)</name>
        <dbReference type="ChEBI" id="CHEBI:18420"/>
    </cofactor>
    <text evidence="1">Binds 2 magnesium ions per tetramer.</text>
</comment>
<comment type="subunit">
    <text evidence="1">Tetramer of two alpha and two beta subunits.</text>
</comment>
<comment type="subcellular location">
    <subcellularLocation>
        <location evidence="1">Cytoplasm</location>
    </subcellularLocation>
</comment>
<comment type="similarity">
    <text evidence="1">Belongs to the class-II aminoacyl-tRNA synthetase family. Phe-tRNA synthetase alpha subunit type 1 subfamily.</text>
</comment>